<gene>
    <name evidence="1" type="primary">rplT</name>
    <name type="ordered locus">BCG9842_B0556</name>
</gene>
<reference key="1">
    <citation type="submission" date="2008-10" db="EMBL/GenBank/DDBJ databases">
        <title>Genome sequence of Bacillus cereus G9842.</title>
        <authorList>
            <person name="Dodson R.J."/>
            <person name="Durkin A.S."/>
            <person name="Rosovitz M.J."/>
            <person name="Rasko D.A."/>
            <person name="Hoffmaster A."/>
            <person name="Ravel J."/>
            <person name="Sutton G."/>
        </authorList>
    </citation>
    <scope>NUCLEOTIDE SEQUENCE [LARGE SCALE GENOMIC DNA]</scope>
    <source>
        <strain>G9842</strain>
    </source>
</reference>
<sequence>MPRVKGGTVTRQRRKKVIKLAKGYYGSKNTLFKVANQQVMKSLMYAFRDRRQKKRDFRKLWITRINAAARMNGLSYSRLMHGLKNAGIEVNRKMLADLAVHDEKAFAELATVAKNNIN</sequence>
<evidence type="ECO:0000255" key="1">
    <source>
        <dbReference type="HAMAP-Rule" id="MF_00382"/>
    </source>
</evidence>
<evidence type="ECO:0000305" key="2"/>
<accession>B7IJX1</accession>
<organism>
    <name type="scientific">Bacillus cereus (strain G9842)</name>
    <dbReference type="NCBI Taxonomy" id="405531"/>
    <lineage>
        <taxon>Bacteria</taxon>
        <taxon>Bacillati</taxon>
        <taxon>Bacillota</taxon>
        <taxon>Bacilli</taxon>
        <taxon>Bacillales</taxon>
        <taxon>Bacillaceae</taxon>
        <taxon>Bacillus</taxon>
        <taxon>Bacillus cereus group</taxon>
    </lineage>
</organism>
<protein>
    <recommendedName>
        <fullName evidence="1">Large ribosomal subunit protein bL20</fullName>
    </recommendedName>
    <alternativeName>
        <fullName evidence="2">50S ribosomal protein L20</fullName>
    </alternativeName>
</protein>
<feature type="chain" id="PRO_1000122271" description="Large ribosomal subunit protein bL20">
    <location>
        <begin position="1"/>
        <end position="118"/>
    </location>
</feature>
<dbReference type="EMBL" id="CP001186">
    <property type="protein sequence ID" value="ACK97085.1"/>
    <property type="molecule type" value="Genomic_DNA"/>
</dbReference>
<dbReference type="RefSeq" id="WP_001138362.1">
    <property type="nucleotide sequence ID" value="NC_011772.1"/>
</dbReference>
<dbReference type="SMR" id="B7IJX1"/>
<dbReference type="GeneID" id="93006537"/>
<dbReference type="KEGG" id="bcg:BCG9842_B0556"/>
<dbReference type="HOGENOM" id="CLU_123265_0_1_9"/>
<dbReference type="Proteomes" id="UP000006744">
    <property type="component" value="Chromosome"/>
</dbReference>
<dbReference type="GO" id="GO:1990904">
    <property type="term" value="C:ribonucleoprotein complex"/>
    <property type="evidence" value="ECO:0007669"/>
    <property type="project" value="UniProtKB-KW"/>
</dbReference>
<dbReference type="GO" id="GO:0005840">
    <property type="term" value="C:ribosome"/>
    <property type="evidence" value="ECO:0007669"/>
    <property type="project" value="UniProtKB-KW"/>
</dbReference>
<dbReference type="GO" id="GO:0019843">
    <property type="term" value="F:rRNA binding"/>
    <property type="evidence" value="ECO:0007669"/>
    <property type="project" value="UniProtKB-UniRule"/>
</dbReference>
<dbReference type="GO" id="GO:0003735">
    <property type="term" value="F:structural constituent of ribosome"/>
    <property type="evidence" value="ECO:0007669"/>
    <property type="project" value="InterPro"/>
</dbReference>
<dbReference type="GO" id="GO:0000027">
    <property type="term" value="P:ribosomal large subunit assembly"/>
    <property type="evidence" value="ECO:0007669"/>
    <property type="project" value="UniProtKB-UniRule"/>
</dbReference>
<dbReference type="GO" id="GO:0006412">
    <property type="term" value="P:translation"/>
    <property type="evidence" value="ECO:0007669"/>
    <property type="project" value="InterPro"/>
</dbReference>
<dbReference type="CDD" id="cd07026">
    <property type="entry name" value="Ribosomal_L20"/>
    <property type="match status" value="1"/>
</dbReference>
<dbReference type="FunFam" id="1.10.1900.20:FF:000001">
    <property type="entry name" value="50S ribosomal protein L20"/>
    <property type="match status" value="1"/>
</dbReference>
<dbReference type="Gene3D" id="6.10.160.10">
    <property type="match status" value="1"/>
</dbReference>
<dbReference type="Gene3D" id="1.10.1900.20">
    <property type="entry name" value="Ribosomal protein L20"/>
    <property type="match status" value="1"/>
</dbReference>
<dbReference type="HAMAP" id="MF_00382">
    <property type="entry name" value="Ribosomal_bL20"/>
    <property type="match status" value="1"/>
</dbReference>
<dbReference type="InterPro" id="IPR005813">
    <property type="entry name" value="Ribosomal_bL20"/>
</dbReference>
<dbReference type="InterPro" id="IPR049946">
    <property type="entry name" value="RIBOSOMAL_L20_CS"/>
</dbReference>
<dbReference type="InterPro" id="IPR035566">
    <property type="entry name" value="Ribosomal_protein_bL20_C"/>
</dbReference>
<dbReference type="NCBIfam" id="TIGR01032">
    <property type="entry name" value="rplT_bact"/>
    <property type="match status" value="1"/>
</dbReference>
<dbReference type="PANTHER" id="PTHR10986">
    <property type="entry name" value="39S RIBOSOMAL PROTEIN L20"/>
    <property type="match status" value="1"/>
</dbReference>
<dbReference type="Pfam" id="PF00453">
    <property type="entry name" value="Ribosomal_L20"/>
    <property type="match status" value="1"/>
</dbReference>
<dbReference type="PRINTS" id="PR00062">
    <property type="entry name" value="RIBOSOMALL20"/>
</dbReference>
<dbReference type="SUPFAM" id="SSF74731">
    <property type="entry name" value="Ribosomal protein L20"/>
    <property type="match status" value="1"/>
</dbReference>
<dbReference type="PROSITE" id="PS00937">
    <property type="entry name" value="RIBOSOMAL_L20"/>
    <property type="match status" value="1"/>
</dbReference>
<comment type="function">
    <text evidence="1">Binds directly to 23S ribosomal RNA and is necessary for the in vitro assembly process of the 50S ribosomal subunit. It is not involved in the protein synthesizing functions of that subunit.</text>
</comment>
<comment type="similarity">
    <text evidence="1">Belongs to the bacterial ribosomal protein bL20 family.</text>
</comment>
<keyword id="KW-0687">Ribonucleoprotein</keyword>
<keyword id="KW-0689">Ribosomal protein</keyword>
<keyword id="KW-0694">RNA-binding</keyword>
<keyword id="KW-0699">rRNA-binding</keyword>
<name>RL20_BACC2</name>
<proteinExistence type="inferred from homology"/>